<comment type="function">
    <text>Histones H1 are necessary for the condensation of nucleosome chains into higher-order structures.</text>
</comment>
<comment type="subcellular location">
    <subcellularLocation>
        <location>Nucleus</location>
    </subcellularLocation>
    <subcellularLocation>
        <location>Chromosome</location>
    </subcellularLocation>
</comment>
<comment type="similarity">
    <text evidence="1">Belongs to the histone H1/H5 family.</text>
</comment>
<proteinExistence type="inferred from homology"/>
<accession>P40266</accession>
<dbReference type="EMBL" id="L29104">
    <property type="protein sequence ID" value="AAA62323.1"/>
    <property type="molecule type" value="Genomic_DNA"/>
</dbReference>
<dbReference type="SMR" id="P40266"/>
<dbReference type="GO" id="GO:0000786">
    <property type="term" value="C:nucleosome"/>
    <property type="evidence" value="ECO:0007669"/>
    <property type="project" value="InterPro"/>
</dbReference>
<dbReference type="GO" id="GO:0005634">
    <property type="term" value="C:nucleus"/>
    <property type="evidence" value="ECO:0007669"/>
    <property type="project" value="UniProtKB-SubCell"/>
</dbReference>
<dbReference type="GO" id="GO:0003677">
    <property type="term" value="F:DNA binding"/>
    <property type="evidence" value="ECO:0007669"/>
    <property type="project" value="UniProtKB-KW"/>
</dbReference>
<dbReference type="GO" id="GO:0030527">
    <property type="term" value="F:structural constituent of chromatin"/>
    <property type="evidence" value="ECO:0007669"/>
    <property type="project" value="InterPro"/>
</dbReference>
<dbReference type="GO" id="GO:0006334">
    <property type="term" value="P:nucleosome assembly"/>
    <property type="evidence" value="ECO:0007669"/>
    <property type="project" value="InterPro"/>
</dbReference>
<dbReference type="CDD" id="cd00073">
    <property type="entry name" value="H15"/>
    <property type="match status" value="1"/>
</dbReference>
<dbReference type="FunFam" id="1.10.10.10:FF:000140">
    <property type="entry name" value="Histone H1.0"/>
    <property type="match status" value="1"/>
</dbReference>
<dbReference type="Gene3D" id="1.10.10.10">
    <property type="entry name" value="Winged helix-like DNA-binding domain superfamily/Winged helix DNA-binding domain"/>
    <property type="match status" value="1"/>
</dbReference>
<dbReference type="InterPro" id="IPR005819">
    <property type="entry name" value="H1/H5"/>
</dbReference>
<dbReference type="InterPro" id="IPR005818">
    <property type="entry name" value="Histone_H1/H5_H15"/>
</dbReference>
<dbReference type="InterPro" id="IPR036388">
    <property type="entry name" value="WH-like_DNA-bd_sf"/>
</dbReference>
<dbReference type="InterPro" id="IPR036390">
    <property type="entry name" value="WH_DNA-bd_sf"/>
</dbReference>
<dbReference type="Pfam" id="PF00538">
    <property type="entry name" value="Linker_histone"/>
    <property type="match status" value="1"/>
</dbReference>
<dbReference type="PRINTS" id="PR00624">
    <property type="entry name" value="HISTONEH5"/>
</dbReference>
<dbReference type="SMART" id="SM00526">
    <property type="entry name" value="H15"/>
    <property type="match status" value="1"/>
</dbReference>
<dbReference type="SUPFAM" id="SSF46785">
    <property type="entry name" value="Winged helix' DNA-binding domain"/>
    <property type="match status" value="1"/>
</dbReference>
<dbReference type="PROSITE" id="PS51504">
    <property type="entry name" value="H15"/>
    <property type="match status" value="1"/>
</dbReference>
<keyword id="KW-0158">Chromosome</keyword>
<keyword id="KW-0238">DNA-binding</keyword>
<keyword id="KW-0539">Nucleus</keyword>
<evidence type="ECO:0000255" key="1">
    <source>
        <dbReference type="PROSITE-ProRule" id="PRU00837"/>
    </source>
</evidence>
<evidence type="ECO:0000256" key="2">
    <source>
        <dbReference type="SAM" id="MobiDB-lite"/>
    </source>
</evidence>
<protein>
    <recommendedName>
        <fullName>Histone H1-I</fullName>
    </recommendedName>
</protein>
<reference key="1">
    <citation type="journal article" date="1994" name="J. Cell Biol.">
        <title>Structurally divergent histone H1 variants in chromosomes containing highly condensed interphase chromatin.</title>
        <authorList>
            <person name="Schulze E."/>
            <person name="Nagel S."/>
            <person name="Gavenis K."/>
            <person name="Grossbach U."/>
        </authorList>
    </citation>
    <scope>NUCLEOTIDE SEQUENCE [GENOMIC DNA]</scope>
</reference>
<organism>
    <name type="scientific">Glyptotendipes salinus</name>
    <name type="common">Midge</name>
    <dbReference type="NCBI Taxonomy" id="33400"/>
    <lineage>
        <taxon>Eukaryota</taxon>
        <taxon>Metazoa</taxon>
        <taxon>Ecdysozoa</taxon>
        <taxon>Arthropoda</taxon>
        <taxon>Hexapoda</taxon>
        <taxon>Insecta</taxon>
        <taxon>Pterygota</taxon>
        <taxon>Neoptera</taxon>
        <taxon>Endopterygota</taxon>
        <taxon>Diptera</taxon>
        <taxon>Nematocera</taxon>
        <taxon>Chironomoidea</taxon>
        <taxon>Chironomidae</taxon>
        <taxon>Chironominae</taxon>
        <taxon>Glyptotendipes</taxon>
    </lineage>
</organism>
<sequence length="233" mass="24388">MSDSAPEIETPVEEAPKAATPAKSPAKSPGRAKKAKKDGSDKPKKPKAIPTHPPVSEMVVNALKTLNEKGGSSVIAIKKFLVATYKVEIEKLLPFIKKFLKGAVLKGEVLQVKGTGASGSFKMPPPAKKVDKPEAAPKKKAPRPKREIEKKEKKVVAKKPKPAVEKKAAKPAAKKAVAKPAAKKAAAKPAAKEPAAKASPKKAAAKPKAKPTPKKSTAAKPKAAAKKPAKKSK</sequence>
<name>H11_GLYSA</name>
<feature type="chain" id="PRO_0000195976" description="Histone H1-I">
    <location>
        <begin position="1"/>
        <end position="233"/>
    </location>
</feature>
<feature type="domain" description="H15" evidence="1">
    <location>
        <begin position="51"/>
        <end position="125"/>
    </location>
</feature>
<feature type="region of interest" description="Disordered" evidence="2">
    <location>
        <begin position="1"/>
        <end position="55"/>
    </location>
</feature>
<feature type="region of interest" description="Disordered" evidence="2">
    <location>
        <begin position="115"/>
        <end position="233"/>
    </location>
</feature>
<feature type="compositionally biased region" description="Low complexity" evidence="2">
    <location>
        <begin position="17"/>
        <end position="29"/>
    </location>
</feature>
<feature type="compositionally biased region" description="Basic and acidic residues" evidence="2">
    <location>
        <begin position="128"/>
        <end position="137"/>
    </location>
</feature>
<feature type="compositionally biased region" description="Basic and acidic residues" evidence="2">
    <location>
        <begin position="144"/>
        <end position="155"/>
    </location>
</feature>
<feature type="compositionally biased region" description="Basic residues" evidence="2">
    <location>
        <begin position="172"/>
        <end position="186"/>
    </location>
</feature>
<feature type="compositionally biased region" description="Basic residues" evidence="2">
    <location>
        <begin position="199"/>
        <end position="213"/>
    </location>
</feature>
<feature type="compositionally biased region" description="Basic residues" evidence="2">
    <location>
        <begin position="223"/>
        <end position="233"/>
    </location>
</feature>